<feature type="chain" id="PRO_1000133015" description="Enolase">
    <location>
        <begin position="1"/>
        <end position="424"/>
    </location>
</feature>
<feature type="active site" description="Proton donor" evidence="1">
    <location>
        <position position="204"/>
    </location>
</feature>
<feature type="active site" description="Proton acceptor" evidence="1">
    <location>
        <position position="336"/>
    </location>
</feature>
<feature type="binding site" evidence="1">
    <location>
        <position position="162"/>
    </location>
    <ligand>
        <name>(2R)-2-phosphoglycerate</name>
        <dbReference type="ChEBI" id="CHEBI:58289"/>
    </ligand>
</feature>
<feature type="binding site" evidence="1">
    <location>
        <position position="241"/>
    </location>
    <ligand>
        <name>Mg(2+)</name>
        <dbReference type="ChEBI" id="CHEBI:18420"/>
    </ligand>
</feature>
<feature type="binding site" evidence="1">
    <location>
        <position position="284"/>
    </location>
    <ligand>
        <name>Mg(2+)</name>
        <dbReference type="ChEBI" id="CHEBI:18420"/>
    </ligand>
</feature>
<feature type="binding site" evidence="1">
    <location>
        <position position="311"/>
    </location>
    <ligand>
        <name>Mg(2+)</name>
        <dbReference type="ChEBI" id="CHEBI:18420"/>
    </ligand>
</feature>
<feature type="binding site" evidence="1">
    <location>
        <position position="336"/>
    </location>
    <ligand>
        <name>(2R)-2-phosphoglycerate</name>
        <dbReference type="ChEBI" id="CHEBI:58289"/>
    </ligand>
</feature>
<feature type="binding site" evidence="1">
    <location>
        <position position="365"/>
    </location>
    <ligand>
        <name>(2R)-2-phosphoglycerate</name>
        <dbReference type="ChEBI" id="CHEBI:58289"/>
    </ligand>
</feature>
<feature type="binding site" evidence="1">
    <location>
        <position position="366"/>
    </location>
    <ligand>
        <name>(2R)-2-phosphoglycerate</name>
        <dbReference type="ChEBI" id="CHEBI:58289"/>
    </ligand>
</feature>
<feature type="binding site" evidence="1">
    <location>
        <position position="387"/>
    </location>
    <ligand>
        <name>(2R)-2-phosphoglycerate</name>
        <dbReference type="ChEBI" id="CHEBI:58289"/>
    </ligand>
</feature>
<gene>
    <name evidence="1" type="primary">eno</name>
    <name type="ordered locus">NGR_c12800</name>
</gene>
<evidence type="ECO:0000255" key="1">
    <source>
        <dbReference type="HAMAP-Rule" id="MF_00318"/>
    </source>
</evidence>
<reference key="1">
    <citation type="journal article" date="2009" name="Appl. Environ. Microbiol.">
        <title>Rhizobium sp. strain NGR234 possesses a remarkable number of secretion systems.</title>
        <authorList>
            <person name="Schmeisser C."/>
            <person name="Liesegang H."/>
            <person name="Krysciak D."/>
            <person name="Bakkou N."/>
            <person name="Le Quere A."/>
            <person name="Wollherr A."/>
            <person name="Heinemeyer I."/>
            <person name="Morgenstern B."/>
            <person name="Pommerening-Roeser A."/>
            <person name="Flores M."/>
            <person name="Palacios R."/>
            <person name="Brenner S."/>
            <person name="Gottschalk G."/>
            <person name="Schmitz R.A."/>
            <person name="Broughton W.J."/>
            <person name="Perret X."/>
            <person name="Strittmatter A.W."/>
            <person name="Streit W.R."/>
        </authorList>
    </citation>
    <scope>NUCLEOTIDE SEQUENCE [LARGE SCALE GENOMIC DNA]</scope>
    <source>
        <strain>NBRC 101917 / NGR234</strain>
    </source>
</reference>
<protein>
    <recommendedName>
        <fullName evidence="1">Enolase</fullName>
        <ecNumber evidence="1">4.2.1.11</ecNumber>
    </recommendedName>
    <alternativeName>
        <fullName evidence="1">2-phospho-D-glycerate hydro-lyase</fullName>
    </alternativeName>
    <alternativeName>
        <fullName evidence="1">2-phosphoglycerate dehydratase</fullName>
    </alternativeName>
</protein>
<keyword id="KW-0963">Cytoplasm</keyword>
<keyword id="KW-0324">Glycolysis</keyword>
<keyword id="KW-0456">Lyase</keyword>
<keyword id="KW-0460">Magnesium</keyword>
<keyword id="KW-0479">Metal-binding</keyword>
<keyword id="KW-1185">Reference proteome</keyword>
<keyword id="KW-0964">Secreted</keyword>
<proteinExistence type="inferred from homology"/>
<dbReference type="EC" id="4.2.1.11" evidence="1"/>
<dbReference type="EMBL" id="CP001389">
    <property type="protein sequence ID" value="ACP25061.1"/>
    <property type="molecule type" value="Genomic_DNA"/>
</dbReference>
<dbReference type="RefSeq" id="WP_012707838.1">
    <property type="nucleotide sequence ID" value="NC_012587.1"/>
</dbReference>
<dbReference type="RefSeq" id="YP_002825814.1">
    <property type="nucleotide sequence ID" value="NC_012587.1"/>
</dbReference>
<dbReference type="SMR" id="C3MBJ9"/>
<dbReference type="STRING" id="394.NGR_c12800"/>
<dbReference type="KEGG" id="rhi:NGR_c12800"/>
<dbReference type="PATRIC" id="fig|394.7.peg.4102"/>
<dbReference type="eggNOG" id="COG0148">
    <property type="taxonomic scope" value="Bacteria"/>
</dbReference>
<dbReference type="HOGENOM" id="CLU_031223_2_1_5"/>
<dbReference type="OrthoDB" id="9804716at2"/>
<dbReference type="UniPathway" id="UPA00109">
    <property type="reaction ID" value="UER00187"/>
</dbReference>
<dbReference type="Proteomes" id="UP000001054">
    <property type="component" value="Chromosome"/>
</dbReference>
<dbReference type="GO" id="GO:0009986">
    <property type="term" value="C:cell surface"/>
    <property type="evidence" value="ECO:0007669"/>
    <property type="project" value="UniProtKB-SubCell"/>
</dbReference>
<dbReference type="GO" id="GO:0005576">
    <property type="term" value="C:extracellular region"/>
    <property type="evidence" value="ECO:0007669"/>
    <property type="project" value="UniProtKB-SubCell"/>
</dbReference>
<dbReference type="GO" id="GO:0000015">
    <property type="term" value="C:phosphopyruvate hydratase complex"/>
    <property type="evidence" value="ECO:0007669"/>
    <property type="project" value="InterPro"/>
</dbReference>
<dbReference type="GO" id="GO:0000287">
    <property type="term" value="F:magnesium ion binding"/>
    <property type="evidence" value="ECO:0007669"/>
    <property type="project" value="UniProtKB-UniRule"/>
</dbReference>
<dbReference type="GO" id="GO:0004634">
    <property type="term" value="F:phosphopyruvate hydratase activity"/>
    <property type="evidence" value="ECO:0007669"/>
    <property type="project" value="UniProtKB-UniRule"/>
</dbReference>
<dbReference type="GO" id="GO:0006096">
    <property type="term" value="P:glycolytic process"/>
    <property type="evidence" value="ECO:0007669"/>
    <property type="project" value="UniProtKB-UniRule"/>
</dbReference>
<dbReference type="CDD" id="cd03313">
    <property type="entry name" value="enolase"/>
    <property type="match status" value="1"/>
</dbReference>
<dbReference type="FunFam" id="3.20.20.120:FF:000001">
    <property type="entry name" value="Enolase"/>
    <property type="match status" value="1"/>
</dbReference>
<dbReference type="FunFam" id="3.30.390.10:FF:000001">
    <property type="entry name" value="Enolase"/>
    <property type="match status" value="1"/>
</dbReference>
<dbReference type="Gene3D" id="3.20.20.120">
    <property type="entry name" value="Enolase-like C-terminal domain"/>
    <property type="match status" value="1"/>
</dbReference>
<dbReference type="Gene3D" id="3.30.390.10">
    <property type="entry name" value="Enolase-like, N-terminal domain"/>
    <property type="match status" value="1"/>
</dbReference>
<dbReference type="HAMAP" id="MF_00318">
    <property type="entry name" value="Enolase"/>
    <property type="match status" value="1"/>
</dbReference>
<dbReference type="InterPro" id="IPR000941">
    <property type="entry name" value="Enolase"/>
</dbReference>
<dbReference type="InterPro" id="IPR036849">
    <property type="entry name" value="Enolase-like_C_sf"/>
</dbReference>
<dbReference type="InterPro" id="IPR029017">
    <property type="entry name" value="Enolase-like_N"/>
</dbReference>
<dbReference type="InterPro" id="IPR020810">
    <property type="entry name" value="Enolase_C"/>
</dbReference>
<dbReference type="InterPro" id="IPR020809">
    <property type="entry name" value="Enolase_CS"/>
</dbReference>
<dbReference type="InterPro" id="IPR020811">
    <property type="entry name" value="Enolase_N"/>
</dbReference>
<dbReference type="NCBIfam" id="TIGR01060">
    <property type="entry name" value="eno"/>
    <property type="match status" value="1"/>
</dbReference>
<dbReference type="PANTHER" id="PTHR11902">
    <property type="entry name" value="ENOLASE"/>
    <property type="match status" value="1"/>
</dbReference>
<dbReference type="PANTHER" id="PTHR11902:SF1">
    <property type="entry name" value="ENOLASE"/>
    <property type="match status" value="1"/>
</dbReference>
<dbReference type="Pfam" id="PF00113">
    <property type="entry name" value="Enolase_C"/>
    <property type="match status" value="1"/>
</dbReference>
<dbReference type="Pfam" id="PF03952">
    <property type="entry name" value="Enolase_N"/>
    <property type="match status" value="1"/>
</dbReference>
<dbReference type="PIRSF" id="PIRSF001400">
    <property type="entry name" value="Enolase"/>
    <property type="match status" value="1"/>
</dbReference>
<dbReference type="PRINTS" id="PR00148">
    <property type="entry name" value="ENOLASE"/>
</dbReference>
<dbReference type="SFLD" id="SFLDF00002">
    <property type="entry name" value="enolase"/>
    <property type="match status" value="1"/>
</dbReference>
<dbReference type="SFLD" id="SFLDG00178">
    <property type="entry name" value="enolase"/>
    <property type="match status" value="1"/>
</dbReference>
<dbReference type="SMART" id="SM01192">
    <property type="entry name" value="Enolase_C"/>
    <property type="match status" value="1"/>
</dbReference>
<dbReference type="SMART" id="SM01193">
    <property type="entry name" value="Enolase_N"/>
    <property type="match status" value="1"/>
</dbReference>
<dbReference type="SUPFAM" id="SSF51604">
    <property type="entry name" value="Enolase C-terminal domain-like"/>
    <property type="match status" value="1"/>
</dbReference>
<dbReference type="SUPFAM" id="SSF54826">
    <property type="entry name" value="Enolase N-terminal domain-like"/>
    <property type="match status" value="1"/>
</dbReference>
<dbReference type="PROSITE" id="PS00164">
    <property type="entry name" value="ENOLASE"/>
    <property type="match status" value="1"/>
</dbReference>
<sequence>MTAIIDIIGREILDSRGNPTVEVDVHLEDGSFGRAAVPSGASTGAHEAVELRDGGTRYLGKGVERAVDAVNGEIFEAIGGLDAENQIQIDKTMIELDGTSNKSRLGANAILGVSLAIAKAAAEAAGLPLYRYVGGPNAHLLPVPMMNIINGGAHADNPIDFQEFMIMPVGAETLKDAVRMGSEVFHTLKKQLAAEGHNTNVGDEGGFAPGLASAPAALDFIMKSIEKAGYKPGEDMYVALDCASTEFFKDGKYVLEGEGRTLEPGAMAEYLAELAGKYPIISIEDGMAEDDWDGWKALTDLIGNKCQLVGDDLFVTNSARLRDGIKMGVANSILVKVNQIGSLSETLDAVETAHKARYTAVMSHRSGETEDSTIADLAVATNCGQIKTGSLARSDRLAKYNQLIRIEEQLGLQAAYAGRSILRG</sequence>
<organism>
    <name type="scientific">Sinorhizobium fredii (strain NBRC 101917 / NGR234)</name>
    <dbReference type="NCBI Taxonomy" id="394"/>
    <lineage>
        <taxon>Bacteria</taxon>
        <taxon>Pseudomonadati</taxon>
        <taxon>Pseudomonadota</taxon>
        <taxon>Alphaproteobacteria</taxon>
        <taxon>Hyphomicrobiales</taxon>
        <taxon>Rhizobiaceae</taxon>
        <taxon>Sinorhizobium/Ensifer group</taxon>
        <taxon>Sinorhizobium</taxon>
    </lineage>
</organism>
<accession>C3MBJ9</accession>
<comment type="function">
    <text evidence="1">Catalyzes the reversible conversion of 2-phosphoglycerate (2-PG) into phosphoenolpyruvate (PEP). It is essential for the degradation of carbohydrates via glycolysis.</text>
</comment>
<comment type="catalytic activity">
    <reaction evidence="1">
        <text>(2R)-2-phosphoglycerate = phosphoenolpyruvate + H2O</text>
        <dbReference type="Rhea" id="RHEA:10164"/>
        <dbReference type="ChEBI" id="CHEBI:15377"/>
        <dbReference type="ChEBI" id="CHEBI:58289"/>
        <dbReference type="ChEBI" id="CHEBI:58702"/>
        <dbReference type="EC" id="4.2.1.11"/>
    </reaction>
</comment>
<comment type="cofactor">
    <cofactor evidence="1">
        <name>Mg(2+)</name>
        <dbReference type="ChEBI" id="CHEBI:18420"/>
    </cofactor>
    <text evidence="1">Binds a second Mg(2+) ion via substrate during catalysis.</text>
</comment>
<comment type="pathway">
    <text evidence="1">Carbohydrate degradation; glycolysis; pyruvate from D-glyceraldehyde 3-phosphate: step 4/5.</text>
</comment>
<comment type="subcellular location">
    <subcellularLocation>
        <location evidence="1">Cytoplasm</location>
    </subcellularLocation>
    <subcellularLocation>
        <location evidence="1">Secreted</location>
    </subcellularLocation>
    <subcellularLocation>
        <location evidence="1">Cell surface</location>
    </subcellularLocation>
    <text evidence="1">Fractions of enolase are present in both the cytoplasm and on the cell surface.</text>
</comment>
<comment type="similarity">
    <text evidence="1">Belongs to the enolase family.</text>
</comment>
<name>ENO_SINFN</name>